<reference key="1">
    <citation type="journal article" date="2003" name="J. Biosci. Bioeng.">
        <title>dffA gene from Aspergillus oryzae encodes L-ornithine N5-oxygenase and is indispensable for deferriferrichrysin biosynthesis.</title>
        <authorList>
            <person name="Yamada O."/>
            <person name="Na Nan S."/>
            <person name="Akao T."/>
            <person name="Tominaga M."/>
            <person name="Watanabe H."/>
            <person name="Satoh T."/>
            <person name="Enei H."/>
            <person name="Akita O."/>
        </authorList>
    </citation>
    <scope>NUCLEOTIDE SEQUENCE [GENOMIC DNA]</scope>
    <scope>FUNCTION</scope>
    <scope>CATALYTIC ACTIVITY</scope>
    <scope>PATHWAY</scope>
    <scope>INDUCTION</scope>
    <source>
        <strain>ATCC 42149 / RIB 40</strain>
    </source>
</reference>
<reference key="2">
    <citation type="journal article" date="2005" name="Nature">
        <title>Genome sequencing and analysis of Aspergillus oryzae.</title>
        <authorList>
            <person name="Machida M."/>
            <person name="Asai K."/>
            <person name="Sano M."/>
            <person name="Tanaka T."/>
            <person name="Kumagai T."/>
            <person name="Terai G."/>
            <person name="Kusumoto K."/>
            <person name="Arima T."/>
            <person name="Akita O."/>
            <person name="Kashiwagi Y."/>
            <person name="Abe K."/>
            <person name="Gomi K."/>
            <person name="Horiuchi H."/>
            <person name="Kitamoto K."/>
            <person name="Kobayashi T."/>
            <person name="Takeuchi M."/>
            <person name="Denning D.W."/>
            <person name="Galagan J.E."/>
            <person name="Nierman W.C."/>
            <person name="Yu J."/>
            <person name="Archer D.B."/>
            <person name="Bennett J.W."/>
            <person name="Bhatnagar D."/>
            <person name="Cleveland T.E."/>
            <person name="Fedorova N.D."/>
            <person name="Gotoh O."/>
            <person name="Horikawa H."/>
            <person name="Hosoyama A."/>
            <person name="Ichinomiya M."/>
            <person name="Igarashi R."/>
            <person name="Iwashita K."/>
            <person name="Juvvadi P.R."/>
            <person name="Kato M."/>
            <person name="Kato Y."/>
            <person name="Kin T."/>
            <person name="Kokubun A."/>
            <person name="Maeda H."/>
            <person name="Maeyama N."/>
            <person name="Maruyama J."/>
            <person name="Nagasaki H."/>
            <person name="Nakajima T."/>
            <person name="Oda K."/>
            <person name="Okada K."/>
            <person name="Paulsen I."/>
            <person name="Sakamoto K."/>
            <person name="Sawano T."/>
            <person name="Takahashi M."/>
            <person name="Takase K."/>
            <person name="Terabayashi Y."/>
            <person name="Wortman J.R."/>
            <person name="Yamada O."/>
            <person name="Yamagata Y."/>
            <person name="Anazawa H."/>
            <person name="Hata Y."/>
            <person name="Koide Y."/>
            <person name="Komori T."/>
            <person name="Koyama Y."/>
            <person name="Minetoki T."/>
            <person name="Suharnan S."/>
            <person name="Tanaka A."/>
            <person name="Isono K."/>
            <person name="Kuhara S."/>
            <person name="Ogasawara N."/>
            <person name="Kikuchi H."/>
        </authorList>
    </citation>
    <scope>NUCLEOTIDE SEQUENCE [LARGE SCALE GENOMIC DNA]</scope>
    <source>
        <strain>ATCC 42149 / RIB 40</strain>
    </source>
</reference>
<evidence type="ECO:0000250" key="1">
    <source>
        <dbReference type="UniProtKB" id="E9QYP0"/>
    </source>
</evidence>
<evidence type="ECO:0000256" key="2">
    <source>
        <dbReference type="SAM" id="MobiDB-lite"/>
    </source>
</evidence>
<evidence type="ECO:0000269" key="3">
    <source>
    </source>
</evidence>
<evidence type="ECO:0000303" key="4">
    <source>
    </source>
</evidence>
<evidence type="ECO:0000305" key="5"/>
<feature type="chain" id="PRO_0000431071" description="L-ornithine N(5)-monooxygenase">
    <location>
        <begin position="1"/>
        <end position="502"/>
    </location>
</feature>
<feature type="region of interest" description="Disordered" evidence="2">
    <location>
        <begin position="1"/>
        <end position="34"/>
    </location>
</feature>
<feature type="compositionally biased region" description="Basic and acidic residues" evidence="2">
    <location>
        <begin position="1"/>
        <end position="10"/>
    </location>
</feature>
<feature type="compositionally biased region" description="Polar residues" evidence="2">
    <location>
        <begin position="13"/>
        <end position="26"/>
    </location>
</feature>
<feature type="binding site" evidence="1">
    <location>
        <begin position="83"/>
        <end position="91"/>
    </location>
    <ligand>
        <name>FAD</name>
        <dbReference type="ChEBI" id="CHEBI:57692"/>
    </ligand>
</feature>
<feature type="binding site" evidence="1">
    <location>
        <position position="102"/>
    </location>
    <ligand>
        <name>FAD</name>
        <dbReference type="ChEBI" id="CHEBI:57692"/>
    </ligand>
</feature>
<feature type="binding site" evidence="1">
    <location>
        <position position="107"/>
    </location>
    <ligand>
        <name>substrate</name>
    </ligand>
</feature>
<feature type="binding site" evidence="1">
    <location>
        <position position="168"/>
    </location>
    <ligand>
        <name>FAD</name>
        <dbReference type="ChEBI" id="CHEBI:57692"/>
    </ligand>
</feature>
<feature type="binding site" evidence="1">
    <location>
        <begin position="254"/>
        <end position="257"/>
    </location>
    <ligand>
        <name>NADP(+)</name>
        <dbReference type="ChEBI" id="CHEBI:58349"/>
    </ligand>
</feature>
<feature type="binding site" evidence="1">
    <location>
        <position position="279"/>
    </location>
    <ligand>
        <name>NADP(+)</name>
        <dbReference type="ChEBI" id="CHEBI:58349"/>
    </ligand>
</feature>
<feature type="binding site" evidence="1">
    <location>
        <begin position="293"/>
        <end position="296"/>
    </location>
    <ligand>
        <name>substrate</name>
    </ligand>
</feature>
<feature type="binding site" evidence="1">
    <location>
        <begin position="323"/>
        <end position="325"/>
    </location>
    <ligand>
        <name>NADP(+)</name>
        <dbReference type="ChEBI" id="CHEBI:58349"/>
    </ligand>
</feature>
<feature type="binding site" evidence="1">
    <location>
        <position position="323"/>
    </location>
    <ligand>
        <name>substrate</name>
    </ligand>
</feature>
<feature type="binding site" evidence="1">
    <location>
        <begin position="466"/>
        <end position="468"/>
    </location>
    <ligand>
        <name>FAD</name>
        <dbReference type="ChEBI" id="CHEBI:57692"/>
    </ligand>
</feature>
<feature type="binding site" evidence="1">
    <location>
        <position position="469"/>
    </location>
    <ligand>
        <name>substrate</name>
    </ligand>
</feature>
<sequence>MEPVERKLEIGSRSYSKMPLTQQRSSGEPPRLKATPKDELHDLLCVGFGPASLAIAIALHDALDPCLNKTPNSNWQPKVCFLERQKQFAWHSGMLVPGSKMQISFIKDLATMRDPRSSFTFLNYLHQKDRLIHFTNLSTFLPARMEFEDYMRWCAQRFAHVVSYGEEVIEVIPGKTNPSSTLVDFFTVKSRNVETGEISARMARKVVVALGGTAKLPKELPQDPRIMHSSKYCTTLPAMLKDSREAYNIAVLGSGQSAAEIFHDLQKRYPNSKTTLIMRDTAMRPSDDSPFVNEVFNPERVDKFFSLSSAERQRSLTADKATNYSVVRLELIEQIFNDMYLQRVQNPDETQWQHRILPGRKITRVEHYGPHRRMRLHVRAVKDEKDSLVGNGKETLEVDALMVATGYNRNAHEQLLKNVQHLRPAGQENWTPNREYRVELDPSKVNAQAGIWLQGCNEQTHGLSDSLLSILASRSGEMVNSIFGGEFAGTTVPDTTHIRAML</sequence>
<name>SIDA_ASPOR</name>
<accession>Q2TZB2</accession>
<accession>Q8J2V1</accession>
<organism>
    <name type="scientific">Aspergillus oryzae (strain ATCC 42149 / RIB 40)</name>
    <name type="common">Yellow koji mold</name>
    <dbReference type="NCBI Taxonomy" id="510516"/>
    <lineage>
        <taxon>Eukaryota</taxon>
        <taxon>Fungi</taxon>
        <taxon>Dikarya</taxon>
        <taxon>Ascomycota</taxon>
        <taxon>Pezizomycotina</taxon>
        <taxon>Eurotiomycetes</taxon>
        <taxon>Eurotiomycetidae</taxon>
        <taxon>Eurotiales</taxon>
        <taxon>Aspergillaceae</taxon>
        <taxon>Aspergillus</taxon>
        <taxon>Aspergillus subgen. Circumdati</taxon>
    </lineage>
</organism>
<dbReference type="EC" id="1.14.13.196" evidence="3"/>
<dbReference type="EMBL" id="AB071287">
    <property type="protein sequence ID" value="BAC15565.1"/>
    <property type="molecule type" value="Genomic_DNA"/>
</dbReference>
<dbReference type="EMBL" id="BA000055">
    <property type="protein sequence ID" value="BAE65353.1"/>
    <property type="status" value="ALT_SEQ"/>
    <property type="molecule type" value="Genomic_DNA"/>
</dbReference>
<dbReference type="RefSeq" id="XP_001826486.2">
    <property type="nucleotide sequence ID" value="XM_001826434.2"/>
</dbReference>
<dbReference type="SMR" id="Q2TZB2"/>
<dbReference type="STRING" id="510516.Q2TZB2"/>
<dbReference type="VEuPathDB" id="FungiDB:AO090011000926"/>
<dbReference type="OMA" id="YHGNTNY"/>
<dbReference type="Proteomes" id="UP000006564">
    <property type="component" value="Chromosome 7"/>
</dbReference>
<dbReference type="GO" id="GO:0004499">
    <property type="term" value="F:N,N-dimethylaniline monooxygenase activity"/>
    <property type="evidence" value="ECO:0000315"/>
    <property type="project" value="AspGD"/>
</dbReference>
<dbReference type="GO" id="GO:0031172">
    <property type="term" value="F:ornithine N5-monooxygenase activity"/>
    <property type="evidence" value="ECO:0007669"/>
    <property type="project" value="RHEA"/>
</dbReference>
<dbReference type="GO" id="GO:0010106">
    <property type="term" value="P:cellular response to iron ion starvation"/>
    <property type="evidence" value="ECO:0007669"/>
    <property type="project" value="EnsemblFungi"/>
</dbReference>
<dbReference type="GO" id="GO:0031169">
    <property type="term" value="P:ferrichrome biosynthetic process"/>
    <property type="evidence" value="ECO:0007669"/>
    <property type="project" value="EnsemblFungi"/>
</dbReference>
<dbReference type="GO" id="GO:0019290">
    <property type="term" value="P:siderophore biosynthetic process"/>
    <property type="evidence" value="ECO:0000315"/>
    <property type="project" value="AspGD"/>
</dbReference>
<dbReference type="FunFam" id="3.50.50.60:FF:000195">
    <property type="entry name" value="L-ornithine N(5)-monooxygenase"/>
    <property type="match status" value="1"/>
</dbReference>
<dbReference type="Gene3D" id="3.50.50.60">
    <property type="entry name" value="FAD/NAD(P)-binding domain"/>
    <property type="match status" value="1"/>
</dbReference>
<dbReference type="InterPro" id="IPR036188">
    <property type="entry name" value="FAD/NAD-bd_sf"/>
</dbReference>
<dbReference type="InterPro" id="IPR025700">
    <property type="entry name" value="Lys/Orn_oxygenase"/>
</dbReference>
<dbReference type="PANTHER" id="PTHR42802:SF1">
    <property type="entry name" value="L-ORNITHINE N(5)-MONOOXYGENASE"/>
    <property type="match status" value="1"/>
</dbReference>
<dbReference type="PANTHER" id="PTHR42802">
    <property type="entry name" value="MONOOXYGENASE"/>
    <property type="match status" value="1"/>
</dbReference>
<dbReference type="Pfam" id="PF13434">
    <property type="entry name" value="Lys_Orn_oxgnase"/>
    <property type="match status" value="1"/>
</dbReference>
<dbReference type="SUPFAM" id="SSF51905">
    <property type="entry name" value="FAD/NAD(P)-binding domain"/>
    <property type="match status" value="1"/>
</dbReference>
<comment type="function">
    <text evidence="3">Catalyzes the conversion of L-ornithine to N(5)-hydroxyornithine, the first step in the biosynthesis of all hydroxamate-containing siderophores, such as deferriferrichrysin.</text>
</comment>
<comment type="catalytic activity">
    <reaction evidence="3">
        <text>L-ornithine + NADPH + O2 = N(5)-hydroxy-L-ornithine + NADP(+) + H2O</text>
        <dbReference type="Rhea" id="RHEA:41508"/>
        <dbReference type="ChEBI" id="CHEBI:15377"/>
        <dbReference type="ChEBI" id="CHEBI:15379"/>
        <dbReference type="ChEBI" id="CHEBI:46911"/>
        <dbReference type="ChEBI" id="CHEBI:57783"/>
        <dbReference type="ChEBI" id="CHEBI:58349"/>
        <dbReference type="ChEBI" id="CHEBI:78275"/>
        <dbReference type="EC" id="1.14.13.196"/>
    </reaction>
</comment>
<comment type="catalytic activity">
    <reaction evidence="3">
        <text>L-ornithine + NADH + O2 = N(5)-hydroxy-L-ornithine + NAD(+) + H2O</text>
        <dbReference type="Rhea" id="RHEA:41512"/>
        <dbReference type="ChEBI" id="CHEBI:15377"/>
        <dbReference type="ChEBI" id="CHEBI:15379"/>
        <dbReference type="ChEBI" id="CHEBI:46911"/>
        <dbReference type="ChEBI" id="CHEBI:57540"/>
        <dbReference type="ChEBI" id="CHEBI:57945"/>
        <dbReference type="ChEBI" id="CHEBI:78275"/>
        <dbReference type="EC" id="1.14.13.196"/>
    </reaction>
</comment>
<comment type="cofactor">
    <cofactor evidence="1">
        <name>FAD</name>
        <dbReference type="ChEBI" id="CHEBI:57692"/>
    </cofactor>
    <text evidence="1">Binds 1 FAD per subunit.</text>
</comment>
<comment type="pathway">
    <text evidence="3">Siderophore biosynthesis.</text>
</comment>
<comment type="subunit">
    <text evidence="1">Homotetramer.</text>
</comment>
<comment type="induction">
    <text evidence="3">Induced under iron-limiting conditions.</text>
</comment>
<comment type="similarity">
    <text evidence="5">Belongs to the lysine N(6)-hydroxylase/L-ornithine N(5)-oxygenase family.</text>
</comment>
<comment type="sequence caution" evidence="5">
    <conflict type="erroneous gene model prediction">
        <sequence resource="EMBL-CDS" id="BAE65353"/>
    </conflict>
</comment>
<gene>
    <name evidence="4" type="primary">dffA</name>
    <name type="ORF">AO090011000926</name>
</gene>
<keyword id="KW-0274">FAD</keyword>
<keyword id="KW-0285">Flavoprotein</keyword>
<keyword id="KW-0503">Monooxygenase</keyword>
<keyword id="KW-0521">NADP</keyword>
<keyword id="KW-0560">Oxidoreductase</keyword>
<keyword id="KW-1185">Reference proteome</keyword>
<protein>
    <recommendedName>
        <fullName evidence="1">L-ornithine N(5)-monooxygenase</fullName>
        <shortName evidence="1">OMO</shortName>
        <ecNumber evidence="3">1.14.13.196</ecNumber>
    </recommendedName>
    <alternativeName>
        <fullName evidence="4">Deferriferrichrysin biosynthesis protein A</fullName>
    </alternativeName>
    <alternativeName>
        <fullName evidence="4">L-ornithine N(5)-oxygenase</fullName>
    </alternativeName>
</protein>
<proteinExistence type="evidence at protein level"/>